<comment type="function">
    <text evidence="1">Produces ATP from ADP in the presence of a proton gradient across the membrane.</text>
</comment>
<comment type="subunit">
    <text>F-type ATPases have 2 components, CF(1) - the catalytic core - and CF(0) - the membrane proton channel. CF(1) has five subunits: alpha(3), beta(3), gamma(1), delta(1), epsilon(1). CF(0) has three main subunits: a, b and c.</text>
</comment>
<comment type="subcellular location">
    <subcellularLocation>
        <location evidence="1">Cell inner membrane</location>
        <topology evidence="1">Peripheral membrane protein</topology>
    </subcellularLocation>
</comment>
<comment type="similarity">
    <text evidence="1">Belongs to the ATPase epsilon chain family.</text>
</comment>
<evidence type="ECO:0000255" key="1">
    <source>
        <dbReference type="HAMAP-Rule" id="MF_00530"/>
    </source>
</evidence>
<dbReference type="EMBL" id="AP007255">
    <property type="protein sequence ID" value="BAE52942.1"/>
    <property type="molecule type" value="Genomic_DNA"/>
</dbReference>
<dbReference type="RefSeq" id="WP_011386487.1">
    <property type="nucleotide sequence ID" value="NC_007626.1"/>
</dbReference>
<dbReference type="SMR" id="Q2VZN3"/>
<dbReference type="STRING" id="342108.amb4138"/>
<dbReference type="KEGG" id="mag:amb4138"/>
<dbReference type="HOGENOM" id="CLU_084338_2_1_5"/>
<dbReference type="OrthoDB" id="9799969at2"/>
<dbReference type="Proteomes" id="UP000007058">
    <property type="component" value="Chromosome"/>
</dbReference>
<dbReference type="GO" id="GO:0005886">
    <property type="term" value="C:plasma membrane"/>
    <property type="evidence" value="ECO:0007669"/>
    <property type="project" value="UniProtKB-SubCell"/>
</dbReference>
<dbReference type="GO" id="GO:0045259">
    <property type="term" value="C:proton-transporting ATP synthase complex"/>
    <property type="evidence" value="ECO:0007669"/>
    <property type="project" value="UniProtKB-KW"/>
</dbReference>
<dbReference type="GO" id="GO:0005524">
    <property type="term" value="F:ATP binding"/>
    <property type="evidence" value="ECO:0007669"/>
    <property type="project" value="UniProtKB-UniRule"/>
</dbReference>
<dbReference type="GO" id="GO:0046933">
    <property type="term" value="F:proton-transporting ATP synthase activity, rotational mechanism"/>
    <property type="evidence" value="ECO:0007669"/>
    <property type="project" value="UniProtKB-UniRule"/>
</dbReference>
<dbReference type="CDD" id="cd12152">
    <property type="entry name" value="F1-ATPase_delta"/>
    <property type="match status" value="1"/>
</dbReference>
<dbReference type="Gene3D" id="2.60.15.10">
    <property type="entry name" value="F0F1 ATP synthase delta/epsilon subunit, N-terminal"/>
    <property type="match status" value="1"/>
</dbReference>
<dbReference type="HAMAP" id="MF_00530">
    <property type="entry name" value="ATP_synth_epsil_bac"/>
    <property type="match status" value="1"/>
</dbReference>
<dbReference type="InterPro" id="IPR001469">
    <property type="entry name" value="ATP_synth_F1_dsu/esu"/>
</dbReference>
<dbReference type="InterPro" id="IPR020546">
    <property type="entry name" value="ATP_synth_F1_dsu/esu_N"/>
</dbReference>
<dbReference type="InterPro" id="IPR036771">
    <property type="entry name" value="ATPsynth_dsu/esu_N"/>
</dbReference>
<dbReference type="NCBIfam" id="TIGR01216">
    <property type="entry name" value="ATP_synt_epsi"/>
    <property type="match status" value="1"/>
</dbReference>
<dbReference type="NCBIfam" id="NF001851">
    <property type="entry name" value="PRK00571.2-4"/>
    <property type="match status" value="1"/>
</dbReference>
<dbReference type="PANTHER" id="PTHR13822">
    <property type="entry name" value="ATP SYNTHASE DELTA/EPSILON CHAIN"/>
    <property type="match status" value="1"/>
</dbReference>
<dbReference type="PANTHER" id="PTHR13822:SF10">
    <property type="entry name" value="ATP SYNTHASE EPSILON CHAIN, CHLOROPLASTIC"/>
    <property type="match status" value="1"/>
</dbReference>
<dbReference type="Pfam" id="PF02823">
    <property type="entry name" value="ATP-synt_DE_N"/>
    <property type="match status" value="1"/>
</dbReference>
<dbReference type="SUPFAM" id="SSF51344">
    <property type="entry name" value="Epsilon subunit of F1F0-ATP synthase N-terminal domain"/>
    <property type="match status" value="1"/>
</dbReference>
<accession>Q2VZN3</accession>
<sequence length="133" mass="13825">MAEKIQFELVSPAKLLVSSKVDMVVVPGAEGDFGALALHAPMITTVRPGVIDIHDGGKVSSSVFVAGGFAEVNEERITVLAEEAIPVGELTAEMAEARKKAAKEALDDAKSDRDKAHAGRLMLVAEAMAAAVA</sequence>
<protein>
    <recommendedName>
        <fullName evidence="1">ATP synthase epsilon chain</fullName>
    </recommendedName>
    <alternativeName>
        <fullName evidence="1">ATP synthase F1 sector epsilon subunit</fullName>
    </alternativeName>
    <alternativeName>
        <fullName evidence="1">F-ATPase epsilon subunit</fullName>
    </alternativeName>
</protein>
<name>ATPE_PARM1</name>
<proteinExistence type="inferred from homology"/>
<keyword id="KW-0066">ATP synthesis</keyword>
<keyword id="KW-0997">Cell inner membrane</keyword>
<keyword id="KW-1003">Cell membrane</keyword>
<keyword id="KW-0139">CF(1)</keyword>
<keyword id="KW-0375">Hydrogen ion transport</keyword>
<keyword id="KW-0406">Ion transport</keyword>
<keyword id="KW-0472">Membrane</keyword>
<keyword id="KW-0813">Transport</keyword>
<reference key="1">
    <citation type="journal article" date="2005" name="DNA Res.">
        <title>Complete genome sequence of the facultative anaerobic magnetotactic bacterium Magnetospirillum sp. strain AMB-1.</title>
        <authorList>
            <person name="Matsunaga T."/>
            <person name="Okamura Y."/>
            <person name="Fukuda Y."/>
            <person name="Wahyudi A.T."/>
            <person name="Murase Y."/>
            <person name="Takeyama H."/>
        </authorList>
    </citation>
    <scope>NUCLEOTIDE SEQUENCE [LARGE SCALE GENOMIC DNA]</scope>
    <source>
        <strain>ATCC 700264 / AMB-1</strain>
    </source>
</reference>
<gene>
    <name evidence="1" type="primary">atpC</name>
    <name type="ordered locus">amb4138</name>
</gene>
<feature type="chain" id="PRO_0000265835" description="ATP synthase epsilon chain">
    <location>
        <begin position="1"/>
        <end position="133"/>
    </location>
</feature>
<organism>
    <name type="scientific">Paramagnetospirillum magneticum (strain ATCC 700264 / AMB-1)</name>
    <name type="common">Magnetospirillum magneticum</name>
    <dbReference type="NCBI Taxonomy" id="342108"/>
    <lineage>
        <taxon>Bacteria</taxon>
        <taxon>Pseudomonadati</taxon>
        <taxon>Pseudomonadota</taxon>
        <taxon>Alphaproteobacteria</taxon>
        <taxon>Rhodospirillales</taxon>
        <taxon>Magnetospirillaceae</taxon>
        <taxon>Paramagnetospirillum</taxon>
    </lineage>
</organism>